<accession>Q8NKC0</accession>
<name>ASPG3_SCHPO</name>
<gene>
    <name type="ORF">SPBPB21E7.09</name>
</gene>
<feature type="signal peptide" evidence="2">
    <location>
        <begin position="1"/>
        <end position="16"/>
    </location>
</feature>
<feature type="chain" id="PRO_0000002365" description="Probable L-asparaginase 3">
    <location>
        <begin position="17"/>
        <end position="360"/>
    </location>
</feature>
<feature type="domain" description="Asparaginase/glutaminase" evidence="3">
    <location>
        <begin position="39"/>
        <end position="359"/>
    </location>
</feature>
<feature type="active site" description="O-isoaspartyl threonine intermediate" evidence="1">
    <location>
        <position position="49"/>
    </location>
</feature>
<feature type="binding site" evidence="1">
    <location>
        <position position="96"/>
    </location>
    <ligand>
        <name>substrate</name>
    </ligand>
</feature>
<feature type="binding site" evidence="1">
    <location>
        <begin position="129"/>
        <end position="130"/>
    </location>
    <ligand>
        <name>substrate</name>
    </ligand>
</feature>
<feature type="glycosylation site" description="N-linked (GlcNAc...) asparagine" evidence="2">
    <location>
        <position position="27"/>
    </location>
</feature>
<feature type="glycosylation site" description="N-linked (GlcNAc...) asparagine" evidence="2">
    <location>
        <position position="35"/>
    </location>
</feature>
<feature type="glycosylation site" description="N-linked (GlcNAc...) asparagine" evidence="2">
    <location>
        <position position="40"/>
    </location>
</feature>
<feature type="glycosylation site" description="N-linked (GlcNAc...) asparagine" evidence="2">
    <location>
        <position position="82"/>
    </location>
</feature>
<feature type="glycosylation site" description="N-linked (GlcNAc...) asparagine" evidence="2">
    <location>
        <position position="106"/>
    </location>
</feature>
<feature type="glycosylation site" description="N-linked (GlcNAc...) asparagine" evidence="2">
    <location>
        <position position="144"/>
    </location>
</feature>
<feature type="glycosylation site" description="N-linked (GlcNAc...) asparagine" evidence="2">
    <location>
        <position position="179"/>
    </location>
</feature>
<feature type="glycosylation site" description="N-linked (GlcNAc...) asparagine" evidence="2">
    <location>
        <position position="246"/>
    </location>
</feature>
<feature type="glycosylation site" description="N-linked (GlcNAc...) asparagine" evidence="2">
    <location>
        <position position="302"/>
    </location>
</feature>
<feature type="glycosylation site" description="N-linked (GlcNAc...) asparagine" evidence="2">
    <location>
        <position position="351"/>
    </location>
</feature>
<keyword id="KW-0134">Cell wall</keyword>
<keyword id="KW-0325">Glycoprotein</keyword>
<keyword id="KW-0378">Hydrolase</keyword>
<keyword id="KW-1185">Reference proteome</keyword>
<keyword id="KW-0964">Secreted</keyword>
<keyword id="KW-0732">Signal</keyword>
<evidence type="ECO:0000250" key="1"/>
<evidence type="ECO:0000255" key="2"/>
<evidence type="ECO:0000255" key="3">
    <source>
        <dbReference type="PROSITE-ProRule" id="PRU01068"/>
    </source>
</evidence>
<evidence type="ECO:0000305" key="4"/>
<sequence length="360" mass="38597">MWSSIISFLFFSVALCQPLLFQKRSSNVSDFISFNASLPNVTIFAMGGTIAGYASSSTETVDYAAGSVGIATLVDAVPAIKNFSNIRGVQVTNVGSEELTPANVLNLTQLILAEVAKPDVHGIVVTHGTDSLEETAIFLDMTVNTTKPIVVVGAMRPSTAISADGPMNLLNAVVVAASNRSIGRGTMILLNDRIGSAFYTTKTNGNMLDTFKSYEAGFLGMILDQRPHFFYSPATPTGKVHFDVSNTTELPAVEILYGYQGLNPNLAKAAVDLGAKGLVLAGMGAASWTDPGNEVIDGLISNQSIPVVYSHRTMDGFSDYYYNGIPAYFQNPQKARYMLMLSINAGYSIQNITDIFSLEY</sequence>
<dbReference type="EC" id="3.5.1.1"/>
<dbReference type="EMBL" id="CU329671">
    <property type="protein sequence ID" value="CAD31749.1"/>
    <property type="molecule type" value="Genomic_DNA"/>
</dbReference>
<dbReference type="RefSeq" id="NP_001018773.1">
    <property type="nucleotide sequence ID" value="NM_001020948.2"/>
</dbReference>
<dbReference type="SMR" id="Q8NKC0"/>
<dbReference type="FunCoup" id="Q8NKC0">
    <property type="interactions" value="34"/>
</dbReference>
<dbReference type="STRING" id="284812.Q8NKC0"/>
<dbReference type="PaxDb" id="4896-SPBPB21E7.09.1"/>
<dbReference type="EnsemblFungi" id="SPBPB21E7.09.1">
    <property type="protein sequence ID" value="SPBPB21E7.09.1:pep"/>
    <property type="gene ID" value="SPBPB21E7.09"/>
</dbReference>
<dbReference type="KEGG" id="spo:3361173"/>
<dbReference type="PomBase" id="SPBPB21E7.09"/>
<dbReference type="VEuPathDB" id="FungiDB:SPBPB21E7.09"/>
<dbReference type="eggNOG" id="KOG0503">
    <property type="taxonomic scope" value="Eukaryota"/>
</dbReference>
<dbReference type="HOGENOM" id="CLU_019134_1_2_1"/>
<dbReference type="InParanoid" id="Q8NKC0"/>
<dbReference type="OMA" id="ALDDPYC"/>
<dbReference type="PhylomeDB" id="Q8NKC0"/>
<dbReference type="PRO" id="PR:Q8NKC0"/>
<dbReference type="Proteomes" id="UP000002485">
    <property type="component" value="Chromosome II"/>
</dbReference>
<dbReference type="GO" id="GO:0009986">
    <property type="term" value="C:cell surface"/>
    <property type="evidence" value="ECO:0000303"/>
    <property type="project" value="PomBase"/>
</dbReference>
<dbReference type="GO" id="GO:0005576">
    <property type="term" value="C:extracellular region"/>
    <property type="evidence" value="ECO:0007669"/>
    <property type="project" value="UniProtKB-KW"/>
</dbReference>
<dbReference type="GO" id="GO:0042597">
    <property type="term" value="C:periplasmic space"/>
    <property type="evidence" value="ECO:0000318"/>
    <property type="project" value="GO_Central"/>
</dbReference>
<dbReference type="GO" id="GO:0004067">
    <property type="term" value="F:asparaginase activity"/>
    <property type="evidence" value="ECO:0000318"/>
    <property type="project" value="GO_Central"/>
</dbReference>
<dbReference type="GO" id="GO:0006530">
    <property type="term" value="P:asparagine catabolic process"/>
    <property type="evidence" value="ECO:0000318"/>
    <property type="project" value="GO_Central"/>
</dbReference>
<dbReference type="CDD" id="cd08964">
    <property type="entry name" value="L-asparaginase_II"/>
    <property type="match status" value="1"/>
</dbReference>
<dbReference type="FunFam" id="3.40.50.1170:FF:000001">
    <property type="entry name" value="L-asparaginase 2"/>
    <property type="match status" value="1"/>
</dbReference>
<dbReference type="FunFam" id="3.40.50.40:FF:000006">
    <property type="entry name" value="L-asparaginase I"/>
    <property type="match status" value="1"/>
</dbReference>
<dbReference type="Gene3D" id="3.40.50.40">
    <property type="match status" value="1"/>
</dbReference>
<dbReference type="Gene3D" id="3.40.50.1170">
    <property type="entry name" value="L-asparaginase, N-terminal domain"/>
    <property type="match status" value="1"/>
</dbReference>
<dbReference type="InterPro" id="IPR004550">
    <property type="entry name" value="AsnASE_II"/>
</dbReference>
<dbReference type="InterPro" id="IPR036152">
    <property type="entry name" value="Asp/glu_Ase-like_sf"/>
</dbReference>
<dbReference type="InterPro" id="IPR006034">
    <property type="entry name" value="Asparaginase/glutaminase-like"/>
</dbReference>
<dbReference type="InterPro" id="IPR040919">
    <property type="entry name" value="Asparaginase_C"/>
</dbReference>
<dbReference type="InterPro" id="IPR027473">
    <property type="entry name" value="L-asparaginase_C"/>
</dbReference>
<dbReference type="InterPro" id="IPR027474">
    <property type="entry name" value="L-asparaginase_N"/>
</dbReference>
<dbReference type="InterPro" id="IPR037152">
    <property type="entry name" value="L-asparaginase_N_sf"/>
</dbReference>
<dbReference type="NCBIfam" id="TIGR00520">
    <property type="entry name" value="asnASE_II"/>
    <property type="match status" value="1"/>
</dbReference>
<dbReference type="PANTHER" id="PTHR11707:SF28">
    <property type="entry name" value="60 KDA LYSOPHOSPHOLIPASE"/>
    <property type="match status" value="1"/>
</dbReference>
<dbReference type="PANTHER" id="PTHR11707">
    <property type="entry name" value="L-ASPARAGINASE"/>
    <property type="match status" value="1"/>
</dbReference>
<dbReference type="Pfam" id="PF00710">
    <property type="entry name" value="Asparaginase"/>
    <property type="match status" value="1"/>
</dbReference>
<dbReference type="Pfam" id="PF17763">
    <property type="entry name" value="Asparaginase_C"/>
    <property type="match status" value="1"/>
</dbReference>
<dbReference type="PIRSF" id="PIRSF001220">
    <property type="entry name" value="L-ASNase_gatD"/>
    <property type="match status" value="1"/>
</dbReference>
<dbReference type="PIRSF" id="PIRSF500176">
    <property type="entry name" value="L_ASNase"/>
    <property type="match status" value="1"/>
</dbReference>
<dbReference type="PRINTS" id="PR00139">
    <property type="entry name" value="ASNGLNASE"/>
</dbReference>
<dbReference type="SMART" id="SM00870">
    <property type="entry name" value="Asparaginase"/>
    <property type="match status" value="1"/>
</dbReference>
<dbReference type="SUPFAM" id="SSF53774">
    <property type="entry name" value="Glutaminase/Asparaginase"/>
    <property type="match status" value="1"/>
</dbReference>
<dbReference type="PROSITE" id="PS51732">
    <property type="entry name" value="ASN_GLN_ASE_3"/>
    <property type="match status" value="1"/>
</dbReference>
<proteinExistence type="inferred from homology"/>
<organism>
    <name type="scientific">Schizosaccharomyces pombe (strain 972 / ATCC 24843)</name>
    <name type="common">Fission yeast</name>
    <dbReference type="NCBI Taxonomy" id="284812"/>
    <lineage>
        <taxon>Eukaryota</taxon>
        <taxon>Fungi</taxon>
        <taxon>Dikarya</taxon>
        <taxon>Ascomycota</taxon>
        <taxon>Taphrinomycotina</taxon>
        <taxon>Schizosaccharomycetes</taxon>
        <taxon>Schizosaccharomycetales</taxon>
        <taxon>Schizosaccharomycetaceae</taxon>
        <taxon>Schizosaccharomyces</taxon>
    </lineage>
</organism>
<protein>
    <recommendedName>
        <fullName>Probable L-asparaginase 3</fullName>
        <ecNumber>3.5.1.1</ecNumber>
    </recommendedName>
    <alternativeName>
        <fullName>L-asparagine amidohydrolase 3</fullName>
    </alternativeName>
</protein>
<comment type="catalytic activity">
    <reaction>
        <text>L-asparagine + H2O = L-aspartate + NH4(+)</text>
        <dbReference type="Rhea" id="RHEA:21016"/>
        <dbReference type="ChEBI" id="CHEBI:15377"/>
        <dbReference type="ChEBI" id="CHEBI:28938"/>
        <dbReference type="ChEBI" id="CHEBI:29991"/>
        <dbReference type="ChEBI" id="CHEBI:58048"/>
        <dbReference type="EC" id="3.5.1.1"/>
    </reaction>
</comment>
<comment type="subcellular location">
    <subcellularLocation>
        <location evidence="1">Secreted</location>
        <location evidence="1">Cell wall</location>
    </subcellularLocation>
</comment>
<comment type="similarity">
    <text evidence="4">Belongs to the asparaginase 1 family.</text>
</comment>
<reference key="1">
    <citation type="journal article" date="2002" name="Nature">
        <title>The genome sequence of Schizosaccharomyces pombe.</title>
        <authorList>
            <person name="Wood V."/>
            <person name="Gwilliam R."/>
            <person name="Rajandream M.A."/>
            <person name="Lyne M.H."/>
            <person name="Lyne R."/>
            <person name="Stewart A."/>
            <person name="Sgouros J.G."/>
            <person name="Peat N."/>
            <person name="Hayles J."/>
            <person name="Baker S.G."/>
            <person name="Basham D."/>
            <person name="Bowman S."/>
            <person name="Brooks K."/>
            <person name="Brown D."/>
            <person name="Brown S."/>
            <person name="Chillingworth T."/>
            <person name="Churcher C.M."/>
            <person name="Collins M."/>
            <person name="Connor R."/>
            <person name="Cronin A."/>
            <person name="Davis P."/>
            <person name="Feltwell T."/>
            <person name="Fraser A."/>
            <person name="Gentles S."/>
            <person name="Goble A."/>
            <person name="Hamlin N."/>
            <person name="Harris D.E."/>
            <person name="Hidalgo J."/>
            <person name="Hodgson G."/>
            <person name="Holroyd S."/>
            <person name="Hornsby T."/>
            <person name="Howarth S."/>
            <person name="Huckle E.J."/>
            <person name="Hunt S."/>
            <person name="Jagels K."/>
            <person name="James K.D."/>
            <person name="Jones L."/>
            <person name="Jones M."/>
            <person name="Leather S."/>
            <person name="McDonald S."/>
            <person name="McLean J."/>
            <person name="Mooney P."/>
            <person name="Moule S."/>
            <person name="Mungall K.L."/>
            <person name="Murphy L.D."/>
            <person name="Niblett D."/>
            <person name="Odell C."/>
            <person name="Oliver K."/>
            <person name="O'Neil S."/>
            <person name="Pearson D."/>
            <person name="Quail M.A."/>
            <person name="Rabbinowitsch E."/>
            <person name="Rutherford K.M."/>
            <person name="Rutter S."/>
            <person name="Saunders D."/>
            <person name="Seeger K."/>
            <person name="Sharp S."/>
            <person name="Skelton J."/>
            <person name="Simmonds M.N."/>
            <person name="Squares R."/>
            <person name="Squares S."/>
            <person name="Stevens K."/>
            <person name="Taylor K."/>
            <person name="Taylor R.G."/>
            <person name="Tivey A."/>
            <person name="Walsh S.V."/>
            <person name="Warren T."/>
            <person name="Whitehead S."/>
            <person name="Woodward J.R."/>
            <person name="Volckaert G."/>
            <person name="Aert R."/>
            <person name="Robben J."/>
            <person name="Grymonprez B."/>
            <person name="Weltjens I."/>
            <person name="Vanstreels E."/>
            <person name="Rieger M."/>
            <person name="Schaefer M."/>
            <person name="Mueller-Auer S."/>
            <person name="Gabel C."/>
            <person name="Fuchs M."/>
            <person name="Duesterhoeft A."/>
            <person name="Fritzc C."/>
            <person name="Holzer E."/>
            <person name="Moestl D."/>
            <person name="Hilbert H."/>
            <person name="Borzym K."/>
            <person name="Langer I."/>
            <person name="Beck A."/>
            <person name="Lehrach H."/>
            <person name="Reinhardt R."/>
            <person name="Pohl T.M."/>
            <person name="Eger P."/>
            <person name="Zimmermann W."/>
            <person name="Wedler H."/>
            <person name="Wambutt R."/>
            <person name="Purnelle B."/>
            <person name="Goffeau A."/>
            <person name="Cadieu E."/>
            <person name="Dreano S."/>
            <person name="Gloux S."/>
            <person name="Lelaure V."/>
            <person name="Mottier S."/>
            <person name="Galibert F."/>
            <person name="Aves S.J."/>
            <person name="Xiang Z."/>
            <person name="Hunt C."/>
            <person name="Moore K."/>
            <person name="Hurst S.M."/>
            <person name="Lucas M."/>
            <person name="Rochet M."/>
            <person name="Gaillardin C."/>
            <person name="Tallada V.A."/>
            <person name="Garzon A."/>
            <person name="Thode G."/>
            <person name="Daga R.R."/>
            <person name="Cruzado L."/>
            <person name="Jimenez J."/>
            <person name="Sanchez M."/>
            <person name="del Rey F."/>
            <person name="Benito J."/>
            <person name="Dominguez A."/>
            <person name="Revuelta J.L."/>
            <person name="Moreno S."/>
            <person name="Armstrong J."/>
            <person name="Forsburg S.L."/>
            <person name="Cerutti L."/>
            <person name="Lowe T."/>
            <person name="McCombie W.R."/>
            <person name="Paulsen I."/>
            <person name="Potashkin J."/>
            <person name="Shpakovski G.V."/>
            <person name="Ussery D."/>
            <person name="Barrell B.G."/>
            <person name="Nurse P."/>
        </authorList>
    </citation>
    <scope>NUCLEOTIDE SEQUENCE [LARGE SCALE GENOMIC DNA]</scope>
    <source>
        <strain>972 / ATCC 24843</strain>
    </source>
</reference>